<dbReference type="EMBL" id="CP001020">
    <property type="protein sequence ID" value="ACJ19734.1"/>
    <property type="molecule type" value="Genomic_DNA"/>
</dbReference>
<dbReference type="RefSeq" id="WP_005771513.1">
    <property type="nucleotide sequence ID" value="NC_011528.1"/>
</dbReference>
<dbReference type="SMR" id="B6J5F0"/>
<dbReference type="KEGG" id="cbc:CbuK_0451"/>
<dbReference type="HOGENOM" id="CLU_131047_1_4_6"/>
<dbReference type="GO" id="GO:0022625">
    <property type="term" value="C:cytosolic large ribosomal subunit"/>
    <property type="evidence" value="ECO:0007669"/>
    <property type="project" value="TreeGrafter"/>
</dbReference>
<dbReference type="GO" id="GO:0003735">
    <property type="term" value="F:structural constituent of ribosome"/>
    <property type="evidence" value="ECO:0007669"/>
    <property type="project" value="InterPro"/>
</dbReference>
<dbReference type="GO" id="GO:0006412">
    <property type="term" value="P:translation"/>
    <property type="evidence" value="ECO:0007669"/>
    <property type="project" value="UniProtKB-UniRule"/>
</dbReference>
<dbReference type="CDD" id="cd01658">
    <property type="entry name" value="Ribosomal_L30"/>
    <property type="match status" value="1"/>
</dbReference>
<dbReference type="FunFam" id="3.30.1390.20:FF:000001">
    <property type="entry name" value="50S ribosomal protein L30"/>
    <property type="match status" value="1"/>
</dbReference>
<dbReference type="Gene3D" id="3.30.1390.20">
    <property type="entry name" value="Ribosomal protein L30, ferredoxin-like fold domain"/>
    <property type="match status" value="1"/>
</dbReference>
<dbReference type="HAMAP" id="MF_01371_B">
    <property type="entry name" value="Ribosomal_uL30_B"/>
    <property type="match status" value="1"/>
</dbReference>
<dbReference type="InterPro" id="IPR036919">
    <property type="entry name" value="Ribo_uL30_ferredoxin-like_sf"/>
</dbReference>
<dbReference type="InterPro" id="IPR005996">
    <property type="entry name" value="Ribosomal_uL30_bac-type"/>
</dbReference>
<dbReference type="InterPro" id="IPR016082">
    <property type="entry name" value="Ribosomal_uL30_ferredoxin-like"/>
</dbReference>
<dbReference type="NCBIfam" id="TIGR01308">
    <property type="entry name" value="rpmD_bact"/>
    <property type="match status" value="1"/>
</dbReference>
<dbReference type="PANTHER" id="PTHR15892:SF2">
    <property type="entry name" value="LARGE RIBOSOMAL SUBUNIT PROTEIN UL30M"/>
    <property type="match status" value="1"/>
</dbReference>
<dbReference type="PANTHER" id="PTHR15892">
    <property type="entry name" value="MITOCHONDRIAL RIBOSOMAL PROTEIN L30"/>
    <property type="match status" value="1"/>
</dbReference>
<dbReference type="Pfam" id="PF00327">
    <property type="entry name" value="Ribosomal_L30"/>
    <property type="match status" value="1"/>
</dbReference>
<dbReference type="PIRSF" id="PIRSF002211">
    <property type="entry name" value="Ribosomal_L30_bac-type"/>
    <property type="match status" value="1"/>
</dbReference>
<dbReference type="SUPFAM" id="SSF55129">
    <property type="entry name" value="Ribosomal protein L30p/L7e"/>
    <property type="match status" value="1"/>
</dbReference>
<sequence>MVQEKKLRVTLVKSKYGRKPGHRECIEGLGLRRMHQTVEVTDTPANRGMIEKVSYLLMIDEEV</sequence>
<proteinExistence type="inferred from homology"/>
<reference key="1">
    <citation type="journal article" date="2009" name="Infect. Immun.">
        <title>Comparative genomics reveal extensive transposon-mediated genomic plasticity and diversity among potential effector proteins within the genus Coxiella.</title>
        <authorList>
            <person name="Beare P.A."/>
            <person name="Unsworth N."/>
            <person name="Andoh M."/>
            <person name="Voth D.E."/>
            <person name="Omsland A."/>
            <person name="Gilk S.D."/>
            <person name="Williams K.P."/>
            <person name="Sobral B.W."/>
            <person name="Kupko J.J. III"/>
            <person name="Porcella S.F."/>
            <person name="Samuel J.E."/>
            <person name="Heinzen R.A."/>
        </authorList>
    </citation>
    <scope>NUCLEOTIDE SEQUENCE [LARGE SCALE GENOMIC DNA]</scope>
    <source>
        <strain>CbuK_Q154</strain>
    </source>
</reference>
<organism>
    <name type="scientific">Coxiella burnetii (strain CbuK_Q154)</name>
    <name type="common">Coxiella burnetii (strain Q154)</name>
    <dbReference type="NCBI Taxonomy" id="434924"/>
    <lineage>
        <taxon>Bacteria</taxon>
        <taxon>Pseudomonadati</taxon>
        <taxon>Pseudomonadota</taxon>
        <taxon>Gammaproteobacteria</taxon>
        <taxon>Legionellales</taxon>
        <taxon>Coxiellaceae</taxon>
        <taxon>Coxiella</taxon>
    </lineage>
</organism>
<accession>B6J5F0</accession>
<protein>
    <recommendedName>
        <fullName evidence="1">Large ribosomal subunit protein uL30</fullName>
    </recommendedName>
    <alternativeName>
        <fullName evidence="2">50S ribosomal protein L30</fullName>
    </alternativeName>
</protein>
<keyword id="KW-0687">Ribonucleoprotein</keyword>
<keyword id="KW-0689">Ribosomal protein</keyword>
<feature type="chain" id="PRO_1000144669" description="Large ribosomal subunit protein uL30">
    <location>
        <begin position="1"/>
        <end position="63"/>
    </location>
</feature>
<evidence type="ECO:0000255" key="1">
    <source>
        <dbReference type="HAMAP-Rule" id="MF_01371"/>
    </source>
</evidence>
<evidence type="ECO:0000305" key="2"/>
<gene>
    <name evidence="1" type="primary">rpmD</name>
    <name type="ordered locus">CbuK_0451</name>
</gene>
<comment type="subunit">
    <text evidence="1">Part of the 50S ribosomal subunit.</text>
</comment>
<comment type="similarity">
    <text evidence="1">Belongs to the universal ribosomal protein uL30 family.</text>
</comment>
<name>RL30_COXB1</name>